<comment type="function">
    <text evidence="10">Copper chaperone for apo superoxide dismutase 1 (SOD1). Binds copper ions and delivers them specifically to apo-SOD1.</text>
</comment>
<comment type="cofactor">
    <cofactor evidence="1">
        <name>Cu(2+)</name>
        <dbReference type="ChEBI" id="CHEBI:29036"/>
    </cofactor>
    <text evidence="1">Binds 2 copper ions per subunit.</text>
</comment>
<comment type="subunit">
    <text evidence="2 3 4 5">Homodimer, and heterodimer with apo-SOD1. Zinc-binding at His-16 of CCS1 and 'Glu-43' of apo-SOD1 is required for this heterodimerization.</text>
</comment>
<comment type="interaction">
    <interactant intactId="EBI-10287">
        <id>P40202</id>
    </interactant>
    <interactant intactId="EBI-17635">
        <id>P00445</id>
        <label>SOD1</label>
    </interactant>
    <organismsDiffer>false</organismsDiffer>
    <experiments>3</experiments>
</comment>
<comment type="subcellular location">
    <subcellularLocation>
        <location>Cytoplasm</location>
    </subcellularLocation>
    <subcellularLocation>
        <location evidence="7">Mitochondrion intermembrane space</location>
    </subcellularLocation>
    <text>A small percentage (around 1-5 percent) localizes to the mitochondrial intermembrane space.</text>
</comment>
<comment type="miscellaneous">
    <text evidence="6">Present with 12000 molecules/cell in log phase SD medium.</text>
</comment>
<comment type="similarity">
    <text evidence="11">Belongs to the CCS1 family.</text>
</comment>
<gene>
    <name type="primary">CCS1</name>
    <name type="synonym">LYS7</name>
    <name type="ordered locus">YMR038C</name>
    <name type="ORF">YM9532.03C</name>
</gene>
<evidence type="ECO:0000255" key="1">
    <source>
        <dbReference type="PROSITE-ProRule" id="PRU00280"/>
    </source>
</evidence>
<evidence type="ECO:0000269" key="2">
    <source>
    </source>
</evidence>
<evidence type="ECO:0000269" key="3">
    <source>
    </source>
</evidence>
<evidence type="ECO:0000269" key="4">
    <source>
    </source>
</evidence>
<evidence type="ECO:0000269" key="5">
    <source>
    </source>
</evidence>
<evidence type="ECO:0000269" key="6">
    <source>
    </source>
</evidence>
<evidence type="ECO:0000269" key="7">
    <source>
    </source>
</evidence>
<evidence type="ECO:0000269" key="8">
    <source>
    </source>
</evidence>
<evidence type="ECO:0000269" key="9">
    <source>
    </source>
</evidence>
<evidence type="ECO:0000269" key="10">
    <source>
    </source>
</evidence>
<evidence type="ECO:0000305" key="11"/>
<evidence type="ECO:0007744" key="12">
    <source>
        <dbReference type="PDB" id="1JK9"/>
    </source>
</evidence>
<evidence type="ECO:0007744" key="13">
    <source>
        <dbReference type="PDB" id="1QUP"/>
    </source>
</evidence>
<evidence type="ECO:0007829" key="14">
    <source>
        <dbReference type="PDB" id="1EJ8"/>
    </source>
</evidence>
<evidence type="ECO:0007829" key="15">
    <source>
        <dbReference type="PDB" id="1JK9"/>
    </source>
</evidence>
<evidence type="ECO:0007829" key="16">
    <source>
        <dbReference type="PDB" id="1QUP"/>
    </source>
</evidence>
<evidence type="ECO:0007829" key="17">
    <source>
        <dbReference type="PDB" id="5U9M"/>
    </source>
</evidence>
<accession>P40202</accession>
<accession>D6VZL3</accession>
<dbReference type="EMBL" id="U17378">
    <property type="protein sequence ID" value="AAC49068.1"/>
    <property type="molecule type" value="Genomic_DNA"/>
</dbReference>
<dbReference type="EMBL" id="Z48502">
    <property type="protein sequence ID" value="CAA88404.1"/>
    <property type="molecule type" value="Genomic_DNA"/>
</dbReference>
<dbReference type="EMBL" id="AY558398">
    <property type="protein sequence ID" value="AAS56724.1"/>
    <property type="molecule type" value="Genomic_DNA"/>
</dbReference>
<dbReference type="EMBL" id="BK006946">
    <property type="protein sequence ID" value="DAA09937.1"/>
    <property type="molecule type" value="Genomic_DNA"/>
</dbReference>
<dbReference type="PIR" id="S50245">
    <property type="entry name" value="S50245"/>
</dbReference>
<dbReference type="RefSeq" id="NP_013752.1">
    <property type="nucleotide sequence ID" value="NM_001182535.1"/>
</dbReference>
<dbReference type="PDB" id="1EJ8">
    <property type="method" value="X-ray"/>
    <property type="resolution" value="1.55 A"/>
    <property type="chains" value="A=78-217"/>
</dbReference>
<dbReference type="PDB" id="1JK9">
    <property type="method" value="X-ray"/>
    <property type="resolution" value="2.90 A"/>
    <property type="chains" value="B/D=1-249"/>
</dbReference>
<dbReference type="PDB" id="1QUP">
    <property type="method" value="X-ray"/>
    <property type="resolution" value="1.80 A"/>
    <property type="chains" value="A/B=2-223"/>
</dbReference>
<dbReference type="PDB" id="5U9M">
    <property type="method" value="X-ray"/>
    <property type="resolution" value="2.35 A"/>
    <property type="chains" value="B/D=2-249"/>
</dbReference>
<dbReference type="PDBsum" id="1EJ8"/>
<dbReference type="PDBsum" id="1JK9"/>
<dbReference type="PDBsum" id="1QUP"/>
<dbReference type="PDBsum" id="5U9M"/>
<dbReference type="SMR" id="P40202"/>
<dbReference type="BioGRID" id="35210">
    <property type="interactions" value="217"/>
</dbReference>
<dbReference type="ComplexPortal" id="CPX-2267">
    <property type="entry name" value="SOD1-CCS1 superoxide dismutase heterodimer"/>
</dbReference>
<dbReference type="ComplexPortal" id="CPX-2895">
    <property type="entry name" value="Superoxide dismutase 1 copper chaperone"/>
</dbReference>
<dbReference type="DIP" id="DIP-4507N"/>
<dbReference type="FunCoup" id="P40202">
    <property type="interactions" value="391"/>
</dbReference>
<dbReference type="IntAct" id="P40202">
    <property type="interactions" value="23"/>
</dbReference>
<dbReference type="MINT" id="P40202"/>
<dbReference type="STRING" id="4932.YMR038C"/>
<dbReference type="iPTMnet" id="P40202"/>
<dbReference type="PaxDb" id="4932-YMR038C"/>
<dbReference type="PeptideAtlas" id="P40202"/>
<dbReference type="EnsemblFungi" id="YMR038C_mRNA">
    <property type="protein sequence ID" value="YMR038C"/>
    <property type="gene ID" value="YMR038C"/>
</dbReference>
<dbReference type="GeneID" id="855054"/>
<dbReference type="KEGG" id="sce:YMR038C"/>
<dbReference type="AGR" id="SGD:S000004641"/>
<dbReference type="SGD" id="S000004641">
    <property type="gene designation" value="CCS1"/>
</dbReference>
<dbReference type="VEuPathDB" id="FungiDB:YMR038C"/>
<dbReference type="eggNOG" id="KOG4656">
    <property type="taxonomic scope" value="Eukaryota"/>
</dbReference>
<dbReference type="GeneTree" id="ENSGT00940000159785"/>
<dbReference type="HOGENOM" id="CLU_056632_0_0_1"/>
<dbReference type="InParanoid" id="P40202"/>
<dbReference type="OMA" id="KNVWEER"/>
<dbReference type="OrthoDB" id="666972at2759"/>
<dbReference type="BioCyc" id="YEAST:G3O-32743-MONOMER"/>
<dbReference type="Reactome" id="R-SCE-3299685">
    <property type="pathway name" value="Detoxification of Reactive Oxygen Species"/>
</dbReference>
<dbReference type="BioGRID-ORCS" id="855054">
    <property type="hits" value="1 hit in 10 CRISPR screens"/>
</dbReference>
<dbReference type="EvolutionaryTrace" id="P40202"/>
<dbReference type="PRO" id="PR:P40202"/>
<dbReference type="Proteomes" id="UP000002311">
    <property type="component" value="Chromosome XIII"/>
</dbReference>
<dbReference type="RNAct" id="P40202">
    <property type="molecule type" value="protein"/>
</dbReference>
<dbReference type="GO" id="GO:0005737">
    <property type="term" value="C:cytoplasm"/>
    <property type="evidence" value="ECO:0000318"/>
    <property type="project" value="GO_Central"/>
</dbReference>
<dbReference type="GO" id="GO:0005829">
    <property type="term" value="C:cytosol"/>
    <property type="evidence" value="ECO:0000314"/>
    <property type="project" value="SGD"/>
</dbReference>
<dbReference type="GO" id="GO:0005743">
    <property type="term" value="C:mitochondrial inner membrane"/>
    <property type="evidence" value="ECO:0000314"/>
    <property type="project" value="SGD"/>
</dbReference>
<dbReference type="GO" id="GO:0005758">
    <property type="term" value="C:mitochondrial intermembrane space"/>
    <property type="evidence" value="ECO:0000304"/>
    <property type="project" value="Reactome"/>
</dbReference>
<dbReference type="GO" id="GO:0005739">
    <property type="term" value="C:mitochondrion"/>
    <property type="evidence" value="ECO:0007005"/>
    <property type="project" value="SGD"/>
</dbReference>
<dbReference type="GO" id="GO:0005634">
    <property type="term" value="C:nucleus"/>
    <property type="evidence" value="ECO:0000314"/>
    <property type="project" value="SGD"/>
</dbReference>
<dbReference type="GO" id="GO:0101031">
    <property type="term" value="C:protein folding chaperone complex"/>
    <property type="evidence" value="ECO:0000353"/>
    <property type="project" value="ComplexPortal"/>
</dbReference>
<dbReference type="GO" id="GO:1902693">
    <property type="term" value="C:superoxide dismutase complex"/>
    <property type="evidence" value="ECO:0000353"/>
    <property type="project" value="ComplexPortal"/>
</dbReference>
<dbReference type="GO" id="GO:0005507">
    <property type="term" value="F:copper ion binding"/>
    <property type="evidence" value="ECO:0000318"/>
    <property type="project" value="GO_Central"/>
</dbReference>
<dbReference type="GO" id="GO:0016532">
    <property type="term" value="F:superoxide dismutase copper chaperone activity"/>
    <property type="evidence" value="ECO:0000315"/>
    <property type="project" value="SGD"/>
</dbReference>
<dbReference type="GO" id="GO:0006825">
    <property type="term" value="P:copper ion transport"/>
    <property type="evidence" value="ECO:0000314"/>
    <property type="project" value="ComplexPortal"/>
</dbReference>
<dbReference type="GO" id="GO:0019430">
    <property type="term" value="P:removal of superoxide radicals"/>
    <property type="evidence" value="ECO:0000314"/>
    <property type="project" value="ComplexPortal"/>
</dbReference>
<dbReference type="CDD" id="cd00371">
    <property type="entry name" value="HMA"/>
    <property type="match status" value="1"/>
</dbReference>
<dbReference type="FunFam" id="2.60.40.200:FF:000009">
    <property type="entry name" value="Superoxide dismutase 1 copper chaperone"/>
    <property type="match status" value="1"/>
</dbReference>
<dbReference type="FunFam" id="3.30.70.100:FF:000038">
    <property type="entry name" value="Superoxide dismutase 1 copper chaperone"/>
    <property type="match status" value="1"/>
</dbReference>
<dbReference type="Gene3D" id="3.30.70.100">
    <property type="match status" value="1"/>
</dbReference>
<dbReference type="Gene3D" id="2.60.40.200">
    <property type="entry name" value="Superoxide dismutase, copper/zinc binding domain"/>
    <property type="match status" value="1"/>
</dbReference>
<dbReference type="InterPro" id="IPR006121">
    <property type="entry name" value="HMA_dom"/>
</dbReference>
<dbReference type="InterPro" id="IPR036163">
    <property type="entry name" value="HMA_dom_sf"/>
</dbReference>
<dbReference type="InterPro" id="IPR036423">
    <property type="entry name" value="SOD-like_Cu/Zn_dom_sf"/>
</dbReference>
<dbReference type="InterPro" id="IPR024134">
    <property type="entry name" value="SOD_Cu/Zn_/chaperone"/>
</dbReference>
<dbReference type="PANTHER" id="PTHR10003">
    <property type="entry name" value="SUPEROXIDE DISMUTASE CU-ZN -RELATED"/>
    <property type="match status" value="1"/>
</dbReference>
<dbReference type="Pfam" id="PF00403">
    <property type="entry name" value="HMA"/>
    <property type="match status" value="1"/>
</dbReference>
<dbReference type="SUPFAM" id="SSF49329">
    <property type="entry name" value="Cu,Zn superoxide dismutase-like"/>
    <property type="match status" value="1"/>
</dbReference>
<dbReference type="SUPFAM" id="SSF55008">
    <property type="entry name" value="HMA, heavy metal-associated domain"/>
    <property type="match status" value="1"/>
</dbReference>
<dbReference type="PROSITE" id="PS50846">
    <property type="entry name" value="HMA_2"/>
    <property type="match status" value="1"/>
</dbReference>
<name>CCS1_YEAST</name>
<reference key="1">
    <citation type="journal article" date="1995" name="Gene">
        <title>Cloning and characterization of the Saccharomyces cerevisiae LYS7 gene: evidence for function outside of lysine biosynthesis.</title>
        <authorList>
            <person name="Horecka J."/>
            <person name="Kinsey P.T."/>
            <person name="Sprague G.F. Jr."/>
        </authorList>
    </citation>
    <scope>NUCLEOTIDE SEQUENCE [GENOMIC DNA]</scope>
</reference>
<reference key="2">
    <citation type="journal article" date="1997" name="Nature">
        <title>The nucleotide sequence of Saccharomyces cerevisiae chromosome XIII.</title>
        <authorList>
            <person name="Bowman S."/>
            <person name="Churcher C.M."/>
            <person name="Badcock K."/>
            <person name="Brown D."/>
            <person name="Chillingworth T."/>
            <person name="Connor R."/>
            <person name="Dedman K."/>
            <person name="Devlin K."/>
            <person name="Gentles S."/>
            <person name="Hamlin N."/>
            <person name="Hunt S."/>
            <person name="Jagels K."/>
            <person name="Lye G."/>
            <person name="Moule S."/>
            <person name="Odell C."/>
            <person name="Pearson D."/>
            <person name="Rajandream M.A."/>
            <person name="Rice P."/>
            <person name="Skelton J."/>
            <person name="Walsh S.V."/>
            <person name="Whitehead S."/>
            <person name="Barrell B.G."/>
        </authorList>
    </citation>
    <scope>NUCLEOTIDE SEQUENCE [LARGE SCALE GENOMIC DNA]</scope>
    <source>
        <strain>ATCC 204508 / S288c</strain>
    </source>
</reference>
<reference key="3">
    <citation type="journal article" date="2014" name="G3 (Bethesda)">
        <title>The reference genome sequence of Saccharomyces cerevisiae: Then and now.</title>
        <authorList>
            <person name="Engel S.R."/>
            <person name="Dietrich F.S."/>
            <person name="Fisk D.G."/>
            <person name="Binkley G."/>
            <person name="Balakrishnan R."/>
            <person name="Costanzo M.C."/>
            <person name="Dwight S.S."/>
            <person name="Hitz B.C."/>
            <person name="Karra K."/>
            <person name="Nash R.S."/>
            <person name="Weng S."/>
            <person name="Wong E.D."/>
            <person name="Lloyd P."/>
            <person name="Skrzypek M.S."/>
            <person name="Miyasato S.R."/>
            <person name="Simison M."/>
            <person name="Cherry J.M."/>
        </authorList>
    </citation>
    <scope>GENOME REANNOTATION</scope>
    <source>
        <strain>ATCC 204508 / S288c</strain>
    </source>
</reference>
<reference key="4">
    <citation type="journal article" date="2007" name="Genome Res.">
        <title>Approaching a complete repository of sequence-verified protein-encoding clones for Saccharomyces cerevisiae.</title>
        <authorList>
            <person name="Hu Y."/>
            <person name="Rolfs A."/>
            <person name="Bhullar B."/>
            <person name="Murthy T.V.S."/>
            <person name="Zhu C."/>
            <person name="Berger M.F."/>
            <person name="Camargo A.A."/>
            <person name="Kelley F."/>
            <person name="McCarron S."/>
            <person name="Jepson D."/>
            <person name="Richardson A."/>
            <person name="Raphael J."/>
            <person name="Moreira D."/>
            <person name="Taycher E."/>
            <person name="Zuo D."/>
            <person name="Mohr S."/>
            <person name="Kane M.F."/>
            <person name="Williamson J."/>
            <person name="Simpson A.J.G."/>
            <person name="Bulyk M.L."/>
            <person name="Harlow E."/>
            <person name="Marsischky G."/>
            <person name="Kolodner R.D."/>
            <person name="LaBaer J."/>
        </authorList>
    </citation>
    <scope>NUCLEOTIDE SEQUENCE [GENOMIC DNA]</scope>
    <source>
        <strain>ATCC 204508 / S288c</strain>
    </source>
</reference>
<reference key="5">
    <citation type="journal article" date="1997" name="J. Biol. Chem.">
        <title>The copper chaperone for superoxide dismutase.</title>
        <authorList>
            <person name="Culotta V.C."/>
            <person name="Klomp L.W."/>
            <person name="Strain J."/>
            <person name="Casareno R.L.B."/>
            <person name="Krems B."/>
            <person name="Gitlin J.D."/>
        </authorList>
    </citation>
    <scope>FUNCTION</scope>
    <scope>SUBCELLULAR LOCATION</scope>
</reference>
<reference key="6">
    <citation type="journal article" date="2001" name="J. Biol. Chem.">
        <title>A fraction of yeast Cu,Zn-superoxide dismutase and its metallochaperone, CCS, localize to the intermembrane space of mitochondria. A physiological role for SOD1 in guarding against mitochondrial oxidative damage.</title>
        <authorList>
            <person name="Sturtz L.A."/>
            <person name="Diekert K."/>
            <person name="Jensen L.T."/>
            <person name="Lill R."/>
            <person name="Culotta V.C."/>
        </authorList>
    </citation>
    <scope>SUBCELLULAR LOCATION</scope>
</reference>
<reference key="7">
    <citation type="journal article" date="2003" name="Nature">
        <title>Global analysis of protein expression in yeast.</title>
        <authorList>
            <person name="Ghaemmaghami S."/>
            <person name="Huh W.-K."/>
            <person name="Bower K."/>
            <person name="Howson R.W."/>
            <person name="Belle A."/>
            <person name="Dephoure N."/>
            <person name="O'Shea E.K."/>
            <person name="Weissman J.S."/>
        </authorList>
    </citation>
    <scope>LEVEL OF PROTEIN EXPRESSION [LARGE SCALE ANALYSIS]</scope>
</reference>
<reference key="8">
    <citation type="journal article" date="2000" name="Biochemistry">
        <title>Heterodimer formation between superoxide dismutase and its copper chaperone.</title>
        <authorList>
            <person name="Lamb A.L."/>
            <person name="Torres A.S."/>
            <person name="O'Halloran T.V."/>
            <person name="Rosenzweig A.C."/>
        </authorList>
    </citation>
    <scope>SUBUNIT</scope>
</reference>
<reference key="9">
    <citation type="journal article" date="2007" name="J. Proteome Res.">
        <title>Large-scale phosphorylation analysis of alpha-factor-arrested Saccharomyces cerevisiae.</title>
        <authorList>
            <person name="Li X."/>
            <person name="Gerber S.A."/>
            <person name="Rudner A.D."/>
            <person name="Beausoleil S.A."/>
            <person name="Haas W."/>
            <person name="Villen J."/>
            <person name="Elias J.E."/>
            <person name="Gygi S.P."/>
        </authorList>
    </citation>
    <scope>IDENTIFICATION BY MASS SPECTROMETRY [LARGE SCALE ANALYSIS]</scope>
    <source>
        <strain>ADR376</strain>
    </source>
</reference>
<reference key="10">
    <citation type="journal article" date="2012" name="Mol. Cell. Proteomics">
        <title>Intermembrane space proteome of yeast mitochondria.</title>
        <authorList>
            <person name="Voegtle F.N."/>
            <person name="Burkhart J.M."/>
            <person name="Rao S."/>
            <person name="Gerbeth C."/>
            <person name="Hinrichs J."/>
            <person name="Martinou J.C."/>
            <person name="Chacinska A."/>
            <person name="Sickmann A."/>
            <person name="Zahedi R.P."/>
            <person name="Meisinger C."/>
        </authorList>
    </citation>
    <scope>IDENTIFICATION BY MASS SPECTROMETRY</scope>
    <scope>SUBCELLULAR LOCATION [LARGE SCALE ANALYSIS]</scope>
</reference>
<reference key="11">
    <citation type="journal article" date="1999" name="Nat. Struct. Biol.">
        <title>Crystal structure of the copper chaperone for superoxide dismutase.</title>
        <authorList>
            <person name="Lamb A.L."/>
            <person name="Wernimont A.K."/>
            <person name="Pufahl R.A."/>
            <person name="Culotta V.C."/>
            <person name="O'Halloran T.V."/>
            <person name="Rosenzweig A.C."/>
        </authorList>
    </citation>
    <scope>X-RAY CRYSTALLOGRAPHY (1.80 ANGSTROMS) OF 2-223</scope>
    <scope>SUBUNIT</scope>
    <scope>DISULFIDE BONDS</scope>
</reference>
<reference key="12">
    <citation type="journal article" date="2000" name="Biochemistry">
        <title>X-ray crystallographic and analytical ultracentrifugation analyses of truncated and full-length yeast copper chaperones for SOD (LYS7): a dimer-dimer model of LYS7-SOD association and copper delivery.</title>
        <authorList>
            <person name="Hall L.T."/>
            <person name="Sanchez R.J."/>
            <person name="Holloway S.P."/>
            <person name="Zhu H."/>
            <person name="Stine J.E."/>
            <person name="Lyons T.J."/>
            <person name="Demeler B."/>
            <person name="Schirf V."/>
            <person name="Hansen J.C."/>
            <person name="Nersissian A.M."/>
            <person name="Valentine J.S."/>
            <person name="Hart P.J."/>
        </authorList>
    </citation>
    <scope>X-RAY CRYSTALLOGRAPHY (1.55 ANGSTROMS) OF 78-217</scope>
    <scope>SUBUNIT</scope>
</reference>
<reference key="13">
    <citation type="journal article" date="2001" name="Nat. Struct. Biol.">
        <title>Heterodimeric structure of superoxide dismutase in complex with its metallochaperone.</title>
        <authorList>
            <person name="Lamb A.L."/>
            <person name="Torres A.S."/>
            <person name="O'Halloran T.V."/>
            <person name="Rosenzweig A.C."/>
        </authorList>
    </citation>
    <scope>X-RAY CRYSTALLOGRAPHY (2.90 ANGSTROMS) IN COMPLEX WITH ZINC AND SOD1</scope>
    <scope>SUBUNIT</scope>
    <scope>DISULFIDE BONDS</scope>
</reference>
<organism>
    <name type="scientific">Saccharomyces cerevisiae (strain ATCC 204508 / S288c)</name>
    <name type="common">Baker's yeast</name>
    <dbReference type="NCBI Taxonomy" id="559292"/>
    <lineage>
        <taxon>Eukaryota</taxon>
        <taxon>Fungi</taxon>
        <taxon>Dikarya</taxon>
        <taxon>Ascomycota</taxon>
        <taxon>Saccharomycotina</taxon>
        <taxon>Saccharomycetes</taxon>
        <taxon>Saccharomycetales</taxon>
        <taxon>Saccharomycetaceae</taxon>
        <taxon>Saccharomyces</taxon>
    </lineage>
</organism>
<protein>
    <recommendedName>
        <fullName>Superoxide dismutase 1 copper chaperone</fullName>
    </recommendedName>
</protein>
<feature type="chain" id="PRO_0000213542" description="Superoxide dismutase 1 copper chaperone">
    <location>
        <begin position="1"/>
        <end position="249"/>
    </location>
</feature>
<feature type="domain" description="HMA" evidence="1">
    <location>
        <begin position="6"/>
        <end position="69"/>
    </location>
</feature>
<feature type="binding site" evidence="5 12">
    <location>
        <position position="16"/>
    </location>
    <ligand>
        <name>Zn(2+)</name>
        <dbReference type="ChEBI" id="CHEBI:29105"/>
        <note>ligand shared with apo-SOD1</note>
    </ligand>
</feature>
<feature type="binding site" evidence="1">
    <location>
        <position position="17"/>
    </location>
    <ligand>
        <name>Cu cation</name>
        <dbReference type="ChEBI" id="CHEBI:23378"/>
        <label>1</label>
    </ligand>
</feature>
<feature type="binding site" evidence="1">
    <location>
        <position position="20"/>
    </location>
    <ligand>
        <name>Cu cation</name>
        <dbReference type="ChEBI" id="CHEBI:23378"/>
        <label>1</label>
    </ligand>
</feature>
<feature type="binding site">
    <location>
        <position position="229"/>
    </location>
    <ligand>
        <name>Cu cation</name>
        <dbReference type="ChEBI" id="CHEBI:23378"/>
        <label>2</label>
    </ligand>
</feature>
<feature type="binding site">
    <location>
        <position position="231"/>
    </location>
    <ligand>
        <name>Cu cation</name>
        <dbReference type="ChEBI" id="CHEBI:23378"/>
        <label>2</label>
    </ligand>
</feature>
<feature type="disulfide bond" evidence="9 13">
    <location>
        <begin position="27"/>
        <end position="64"/>
    </location>
</feature>
<feature type="disulfide bond" description="Interchain (with C-58 in apo-SOD1)" evidence="8 12">
    <location>
        <position position="229"/>
    </location>
</feature>
<feature type="helix" evidence="16">
    <location>
        <begin position="3"/>
        <end position="5"/>
    </location>
</feature>
<feature type="strand" evidence="16">
    <location>
        <begin position="7"/>
        <end position="12"/>
    </location>
</feature>
<feature type="strand" evidence="15">
    <location>
        <begin position="17"/>
        <end position="19"/>
    </location>
</feature>
<feature type="helix" evidence="16">
    <location>
        <begin position="20"/>
        <end position="28"/>
    </location>
</feature>
<feature type="strand" evidence="16">
    <location>
        <begin position="34"/>
        <end position="40"/>
    </location>
</feature>
<feature type="turn" evidence="16">
    <location>
        <begin position="41"/>
        <end position="44"/>
    </location>
</feature>
<feature type="strand" evidence="16">
    <location>
        <begin position="45"/>
        <end position="52"/>
    </location>
</feature>
<feature type="helix" evidence="16">
    <location>
        <begin position="54"/>
        <end position="63"/>
    </location>
</feature>
<feature type="strand" evidence="16">
    <location>
        <begin position="69"/>
        <end position="71"/>
    </location>
</feature>
<feature type="strand" evidence="14">
    <location>
        <begin position="79"/>
        <end position="85"/>
    </location>
</feature>
<feature type="strand" evidence="14">
    <location>
        <begin position="100"/>
        <end position="110"/>
    </location>
</feature>
<feature type="strand" evidence="14">
    <location>
        <begin position="113"/>
        <end position="125"/>
    </location>
</feature>
<feature type="strand" evidence="14">
    <location>
        <begin position="127"/>
        <end position="135"/>
    </location>
</feature>
<feature type="helix" evidence="14">
    <location>
        <begin position="142"/>
        <end position="145"/>
    </location>
</feature>
<feature type="strand" evidence="14">
    <location>
        <begin position="148"/>
        <end position="152"/>
    </location>
</feature>
<feature type="strand" evidence="14">
    <location>
        <begin position="157"/>
        <end position="159"/>
    </location>
</feature>
<feature type="strand" evidence="14">
    <location>
        <begin position="161"/>
        <end position="164"/>
    </location>
</feature>
<feature type="turn" evidence="14">
    <location>
        <begin position="165"/>
        <end position="168"/>
    </location>
</feature>
<feature type="strand" evidence="14">
    <location>
        <begin position="169"/>
        <end position="179"/>
    </location>
</feature>
<feature type="helix" evidence="14">
    <location>
        <begin position="182"/>
        <end position="184"/>
    </location>
</feature>
<feature type="turn" evidence="14">
    <location>
        <begin position="185"/>
        <end position="187"/>
    </location>
</feature>
<feature type="strand" evidence="14">
    <location>
        <begin position="188"/>
        <end position="195"/>
    </location>
</feature>
<feature type="helix" evidence="14">
    <location>
        <begin position="199"/>
        <end position="201"/>
    </location>
</feature>
<feature type="strand" evidence="15">
    <location>
        <begin position="202"/>
        <end position="205"/>
    </location>
</feature>
<feature type="strand" evidence="14">
    <location>
        <begin position="208"/>
        <end position="214"/>
    </location>
</feature>
<feature type="strand" evidence="16">
    <location>
        <begin position="216"/>
        <end position="218"/>
    </location>
</feature>
<feature type="strand" evidence="17">
    <location>
        <begin position="227"/>
        <end position="229"/>
    </location>
</feature>
<feature type="strand" evidence="17">
    <location>
        <begin position="235"/>
        <end position="238"/>
    </location>
</feature>
<proteinExistence type="evidence at protein level"/>
<keyword id="KW-0002">3D-structure</keyword>
<keyword id="KW-0143">Chaperone</keyword>
<keyword id="KW-0186">Copper</keyword>
<keyword id="KW-0963">Cytoplasm</keyword>
<keyword id="KW-1015">Disulfide bond</keyword>
<keyword id="KW-0479">Metal-binding</keyword>
<keyword id="KW-0496">Mitochondrion</keyword>
<keyword id="KW-1185">Reference proteome</keyword>
<keyword id="KW-0862">Zinc</keyword>
<sequence>MTTNDTYEATYAIPMHCENCVNDIKACLKNVPGINSLNFDIEQQIMSVESSVAPSTIINTLRNCGKDAIIRGAGKPNSSAVAILETFQKYTIDQKKDTAVRGLARIVQVGENKTLFDITVNGVPEAGNYHASIHEKGDVSKGVESTGKVWHKFDEPIECFNESDLGKNLYSGKTFLSAPLPTWQLIGRSFVISKSLNHPENEPSSVKDYSFLGVIARSAGVWENNKQVCACTGKTVWEERKDALANNIK</sequence>